<evidence type="ECO:0000250" key="1"/>
<evidence type="ECO:0000250" key="2">
    <source>
        <dbReference type="UniProtKB" id="O30142"/>
    </source>
</evidence>
<evidence type="ECO:0000255" key="3">
    <source>
        <dbReference type="PROSITE-ProRule" id="PRU00303"/>
    </source>
</evidence>
<evidence type="ECO:0000305" key="4"/>
<evidence type="ECO:0007829" key="5">
    <source>
        <dbReference type="PDB" id="3CFZ"/>
    </source>
</evidence>
<reference key="1">
    <citation type="journal article" date="1996" name="Science">
        <title>Complete genome sequence of the methanogenic archaeon, Methanococcus jannaschii.</title>
        <authorList>
            <person name="Bult C.J."/>
            <person name="White O."/>
            <person name="Olsen G.J."/>
            <person name="Zhou L."/>
            <person name="Fleischmann R.D."/>
            <person name="Sutton G.G."/>
            <person name="Blake J.A."/>
            <person name="FitzGerald L.M."/>
            <person name="Clayton R.A."/>
            <person name="Gocayne J.D."/>
            <person name="Kerlavage A.R."/>
            <person name="Dougherty B.A."/>
            <person name="Tomb J.-F."/>
            <person name="Adams M.D."/>
            <person name="Reich C.I."/>
            <person name="Overbeek R."/>
            <person name="Kirkness E.F."/>
            <person name="Weinstock K.G."/>
            <person name="Merrick J.M."/>
            <person name="Glodek A."/>
            <person name="Scott J.L."/>
            <person name="Geoghagen N.S.M."/>
            <person name="Weidman J.F."/>
            <person name="Fuhrmann J.L."/>
            <person name="Nguyen D."/>
            <person name="Utterback T.R."/>
            <person name="Kelley J.M."/>
            <person name="Peterson J.D."/>
            <person name="Sadow P.W."/>
            <person name="Hanna M.C."/>
            <person name="Cotton M.D."/>
            <person name="Roberts K.M."/>
            <person name="Hurst M.A."/>
            <person name="Kaine B.P."/>
            <person name="Borodovsky M."/>
            <person name="Klenk H.-P."/>
            <person name="Fraser C.M."/>
            <person name="Smith H.O."/>
            <person name="Woese C.R."/>
            <person name="Venter J.C."/>
        </authorList>
    </citation>
    <scope>NUCLEOTIDE SEQUENCE [LARGE SCALE GENOMIC DNA]</scope>
    <source>
        <strain>ATCC 43067 / DSM 2661 / JAL-1 / JCM 10045 / NBRC 100440</strain>
    </source>
</reference>
<organism>
    <name type="scientific">Methanocaldococcus jannaschii (strain ATCC 43067 / DSM 2661 / JAL-1 / JCM 10045 / NBRC 100440)</name>
    <name type="common">Methanococcus jannaschii</name>
    <dbReference type="NCBI Taxonomy" id="243232"/>
    <lineage>
        <taxon>Archaea</taxon>
        <taxon>Methanobacteriati</taxon>
        <taxon>Methanobacteriota</taxon>
        <taxon>Methanomada group</taxon>
        <taxon>Methanococci</taxon>
        <taxon>Methanococcales</taxon>
        <taxon>Methanocaldococcaceae</taxon>
        <taxon>Methanocaldococcus</taxon>
    </lineage>
</organism>
<accession>Q58586</accession>
<protein>
    <recommendedName>
        <fullName>Molybdate/tungstate-binding protein WtpA</fullName>
    </recommendedName>
</protein>
<dbReference type="EMBL" id="L77117">
    <property type="protein sequence ID" value="AAB99190.1"/>
    <property type="molecule type" value="Genomic_DNA"/>
</dbReference>
<dbReference type="PIR" id="A64448">
    <property type="entry name" value="A64448"/>
</dbReference>
<dbReference type="RefSeq" id="WP_010870699.1">
    <property type="nucleotide sequence ID" value="NC_000909.1"/>
</dbReference>
<dbReference type="PDB" id="3CFZ">
    <property type="method" value="X-ray"/>
    <property type="resolution" value="1.70 A"/>
    <property type="chains" value="A=37-325"/>
</dbReference>
<dbReference type="PDBsum" id="3CFZ"/>
<dbReference type="SMR" id="Q58586"/>
<dbReference type="STRING" id="243232.MJ_1186"/>
<dbReference type="TCDB" id="3.A.1.6.9">
    <property type="family name" value="the atp-binding cassette (abc) superfamily"/>
</dbReference>
<dbReference type="PaxDb" id="243232-MJ_1186"/>
<dbReference type="EnsemblBacteria" id="AAB99190">
    <property type="protein sequence ID" value="AAB99190"/>
    <property type="gene ID" value="MJ_1186"/>
</dbReference>
<dbReference type="GeneID" id="1452084"/>
<dbReference type="KEGG" id="mja:MJ_1186"/>
<dbReference type="eggNOG" id="arCOG00219">
    <property type="taxonomic scope" value="Archaea"/>
</dbReference>
<dbReference type="HOGENOM" id="CLU_055936_0_0_2"/>
<dbReference type="InParanoid" id="Q58586"/>
<dbReference type="OrthoDB" id="7820at2157"/>
<dbReference type="PhylomeDB" id="Q58586"/>
<dbReference type="EvolutionaryTrace" id="Q58586"/>
<dbReference type="Proteomes" id="UP000000805">
    <property type="component" value="Chromosome"/>
</dbReference>
<dbReference type="GO" id="GO:0005886">
    <property type="term" value="C:plasma membrane"/>
    <property type="evidence" value="ECO:0007669"/>
    <property type="project" value="UniProtKB-SubCell"/>
</dbReference>
<dbReference type="GO" id="GO:0046872">
    <property type="term" value="F:metal ion binding"/>
    <property type="evidence" value="ECO:0007669"/>
    <property type="project" value="UniProtKB-KW"/>
</dbReference>
<dbReference type="GO" id="GO:0030973">
    <property type="term" value="F:molybdate ion binding"/>
    <property type="evidence" value="ECO:0000318"/>
    <property type="project" value="GO_Central"/>
</dbReference>
<dbReference type="GO" id="GO:1901359">
    <property type="term" value="F:tungstate binding"/>
    <property type="evidence" value="ECO:0007669"/>
    <property type="project" value="InterPro"/>
</dbReference>
<dbReference type="GO" id="GO:0015689">
    <property type="term" value="P:molybdate ion transport"/>
    <property type="evidence" value="ECO:0000318"/>
    <property type="project" value="GO_Central"/>
</dbReference>
<dbReference type="CDD" id="cd13540">
    <property type="entry name" value="PBP2_ModA_WtpA"/>
    <property type="match status" value="1"/>
</dbReference>
<dbReference type="FunFam" id="3.40.190.10:FF:000440">
    <property type="entry name" value="Uncharacterized solute-binding protein MA_0280"/>
    <property type="match status" value="1"/>
</dbReference>
<dbReference type="Gene3D" id="3.40.190.10">
    <property type="entry name" value="Periplasmic binding protein-like II"/>
    <property type="match status" value="2"/>
</dbReference>
<dbReference type="InterPro" id="IPR022498">
    <property type="entry name" value="ABC_trnspt_W-bd_WtpA"/>
</dbReference>
<dbReference type="InterPro" id="IPR050682">
    <property type="entry name" value="ModA/WtpA"/>
</dbReference>
<dbReference type="NCBIfam" id="NF003196">
    <property type="entry name" value="PRK04168.1"/>
    <property type="match status" value="1"/>
</dbReference>
<dbReference type="NCBIfam" id="TIGR03730">
    <property type="entry name" value="tungstate_WtpA"/>
    <property type="match status" value="1"/>
</dbReference>
<dbReference type="PANTHER" id="PTHR30632">
    <property type="entry name" value="MOLYBDATE-BINDING PERIPLASMIC PROTEIN"/>
    <property type="match status" value="1"/>
</dbReference>
<dbReference type="PANTHER" id="PTHR30632:SF16">
    <property type="entry name" value="MOLYBDATE_TUNGSTATE-BINDING PROTEIN WTPA"/>
    <property type="match status" value="1"/>
</dbReference>
<dbReference type="Pfam" id="PF13531">
    <property type="entry name" value="SBP_bac_11"/>
    <property type="match status" value="1"/>
</dbReference>
<dbReference type="SUPFAM" id="SSF53850">
    <property type="entry name" value="Periplasmic binding protein-like II"/>
    <property type="match status" value="1"/>
</dbReference>
<dbReference type="PROSITE" id="PS51257">
    <property type="entry name" value="PROKAR_LIPOPROTEIN"/>
    <property type="match status" value="1"/>
</dbReference>
<feature type="signal peptide" evidence="3">
    <location>
        <begin position="1"/>
        <end position="19"/>
    </location>
</feature>
<feature type="chain" id="PRO_0000159720" description="Molybdate/tungstate-binding protein WtpA">
    <location>
        <begin position="20"/>
        <end position="346"/>
    </location>
</feature>
<feature type="binding site" evidence="2">
    <location>
        <begin position="46"/>
        <end position="47"/>
    </location>
    <ligand>
        <name>molybdate</name>
        <dbReference type="ChEBI" id="CHEBI:36264"/>
    </ligand>
</feature>
<feature type="binding site" evidence="2">
    <location>
        <begin position="46"/>
        <end position="47"/>
    </location>
    <ligand>
        <name>tungstate</name>
        <dbReference type="ChEBI" id="CHEBI:46502"/>
    </ligand>
</feature>
<feature type="binding site" evidence="2">
    <location>
        <position position="75"/>
    </location>
    <ligand>
        <name>molybdate</name>
        <dbReference type="ChEBI" id="CHEBI:36264"/>
    </ligand>
</feature>
<feature type="binding site" evidence="2">
    <location>
        <position position="75"/>
    </location>
    <ligand>
        <name>tungstate</name>
        <dbReference type="ChEBI" id="CHEBI:46502"/>
    </ligand>
</feature>
<feature type="binding site" evidence="2">
    <location>
        <begin position="158"/>
        <end position="160"/>
    </location>
    <ligand>
        <name>molybdate</name>
        <dbReference type="ChEBI" id="CHEBI:36264"/>
    </ligand>
</feature>
<feature type="binding site" evidence="2">
    <location>
        <begin position="158"/>
        <end position="160"/>
    </location>
    <ligand>
        <name>tungstate</name>
        <dbReference type="ChEBI" id="CHEBI:46502"/>
    </ligand>
</feature>
<feature type="binding site" evidence="2">
    <location>
        <position position="221"/>
    </location>
    <ligand>
        <name>molybdate</name>
        <dbReference type="ChEBI" id="CHEBI:36264"/>
    </ligand>
</feature>
<feature type="binding site" evidence="2">
    <location>
        <position position="221"/>
    </location>
    <ligand>
        <name>tungstate</name>
        <dbReference type="ChEBI" id="CHEBI:46502"/>
    </ligand>
</feature>
<feature type="binding site" evidence="2">
    <location>
        <position position="239"/>
    </location>
    <ligand>
        <name>molybdate</name>
        <dbReference type="ChEBI" id="CHEBI:36264"/>
    </ligand>
</feature>
<feature type="binding site" evidence="2">
    <location>
        <position position="239"/>
    </location>
    <ligand>
        <name>tungstate</name>
        <dbReference type="ChEBI" id="CHEBI:46502"/>
    </ligand>
</feature>
<feature type="strand" evidence="5">
    <location>
        <begin position="38"/>
        <end position="45"/>
    </location>
</feature>
<feature type="helix" evidence="5">
    <location>
        <begin position="46"/>
        <end position="48"/>
    </location>
</feature>
<feature type="helix" evidence="5">
    <location>
        <begin position="49"/>
        <end position="62"/>
    </location>
</feature>
<feature type="strand" evidence="5">
    <location>
        <begin position="66"/>
        <end position="73"/>
    </location>
</feature>
<feature type="helix" evidence="5">
    <location>
        <begin position="75"/>
        <end position="83"/>
    </location>
</feature>
<feature type="strand" evidence="5">
    <location>
        <begin position="90"/>
        <end position="96"/>
    </location>
</feature>
<feature type="helix" evidence="5">
    <location>
        <begin position="99"/>
        <end position="103"/>
    </location>
</feature>
<feature type="turn" evidence="5">
    <location>
        <begin position="104"/>
        <end position="108"/>
    </location>
</feature>
<feature type="strand" evidence="5">
    <location>
        <begin position="113"/>
        <end position="117"/>
    </location>
</feature>
<feature type="strand" evidence="5">
    <location>
        <begin position="120"/>
        <end position="124"/>
    </location>
</feature>
<feature type="turn" evidence="5">
    <location>
        <begin position="129"/>
        <end position="133"/>
    </location>
</feature>
<feature type="turn" evidence="5">
    <location>
        <begin position="136"/>
        <end position="138"/>
    </location>
</feature>
<feature type="helix" evidence="5">
    <location>
        <begin position="139"/>
        <end position="142"/>
    </location>
</feature>
<feature type="strand" evidence="5">
    <location>
        <begin position="150"/>
        <end position="153"/>
    </location>
</feature>
<feature type="turn" evidence="5">
    <location>
        <begin position="155"/>
        <end position="157"/>
    </location>
</feature>
<feature type="helix" evidence="5">
    <location>
        <begin position="159"/>
        <end position="175"/>
    </location>
</feature>
<feature type="helix" evidence="5">
    <location>
        <begin position="180"/>
        <end position="184"/>
    </location>
</feature>
<feature type="helix" evidence="5">
    <location>
        <begin position="186"/>
        <end position="188"/>
    </location>
</feature>
<feature type="strand" evidence="5">
    <location>
        <begin position="192"/>
        <end position="196"/>
    </location>
</feature>
<feature type="strand" evidence="5">
    <location>
        <begin position="199"/>
        <end position="204"/>
    </location>
</feature>
<feature type="turn" evidence="5">
    <location>
        <begin position="212"/>
        <end position="214"/>
    </location>
</feature>
<feature type="strand" evidence="5">
    <location>
        <begin position="215"/>
        <end position="220"/>
    </location>
</feature>
<feature type="helix" evidence="5">
    <location>
        <begin position="221"/>
        <end position="224"/>
    </location>
</feature>
<feature type="helix" evidence="5">
    <location>
        <begin position="225"/>
        <end position="229"/>
    </location>
</feature>
<feature type="strand" evidence="5">
    <location>
        <begin position="232"/>
        <end position="239"/>
    </location>
</feature>
<feature type="helix" evidence="5">
    <location>
        <begin position="240"/>
        <end position="245"/>
    </location>
</feature>
<feature type="strand" evidence="5">
    <location>
        <begin position="249"/>
        <end position="251"/>
    </location>
</feature>
<feature type="turn" evidence="5">
    <location>
        <begin position="255"/>
        <end position="257"/>
    </location>
</feature>
<feature type="helix" evidence="5">
    <location>
        <begin position="262"/>
        <end position="264"/>
    </location>
</feature>
<feature type="helix" evidence="5">
    <location>
        <begin position="265"/>
        <end position="268"/>
    </location>
</feature>
<feature type="strand" evidence="5">
    <location>
        <begin position="271"/>
        <end position="275"/>
    </location>
</feature>
<feature type="helix" evidence="5">
    <location>
        <begin position="276"/>
        <end position="278"/>
    </location>
</feature>
<feature type="strand" evidence="5">
    <location>
        <begin position="280"/>
        <end position="283"/>
    </location>
</feature>
<feature type="strand" evidence="5">
    <location>
        <begin position="288"/>
        <end position="292"/>
    </location>
</feature>
<feature type="helix" evidence="5">
    <location>
        <begin position="300"/>
        <end position="312"/>
    </location>
</feature>
<feature type="helix" evidence="5">
    <location>
        <begin position="315"/>
        <end position="318"/>
    </location>
</feature>
<feature type="turn" evidence="5">
    <location>
        <begin position="319"/>
        <end position="321"/>
    </location>
</feature>
<proteinExistence type="evidence at protein level"/>
<comment type="function">
    <text evidence="1">Part of the ABC transporter complex WtpABC involved in molybdate/tungstate import. Binds tungstate and molybdate (By similarity).</text>
</comment>
<comment type="subunit">
    <text evidence="1">The complex is composed of two ATP-binding proteins (WtpC), two transmembrane proteins (WtpB) and a solute-binding protein (WtpA).</text>
</comment>
<comment type="subcellular location">
    <subcellularLocation>
        <location evidence="3">Cell membrane</location>
        <topology evidence="1">Peripheral membrane protein</topology>
    </subcellularLocation>
</comment>
<comment type="similarity">
    <text evidence="4">Belongs to the bacterial solute-binding protein 1 family. WtpA subfamily.</text>
</comment>
<gene>
    <name type="primary">wtpA</name>
    <name type="ordered locus">MJ1186</name>
</gene>
<name>WTPA_METJA</name>
<keyword id="KW-0002">3D-structure</keyword>
<keyword id="KW-1003">Cell membrane</keyword>
<keyword id="KW-0472">Membrane</keyword>
<keyword id="KW-0479">Metal-binding</keyword>
<keyword id="KW-0500">Molybdenum</keyword>
<keyword id="KW-1185">Reference proteome</keyword>
<keyword id="KW-0732">Signal</keyword>
<keyword id="KW-0813">Transport</keyword>
<sequence>MIKRLIVISILLIVGTVLCGCMEQENVGQQNSEAQEKIVLKIFHAGSLSVPFEEYEKMFEKEHPNVDVEREPAGSVACVRKIIDLGKKADILASADYSLIPQMMMPKYADWYVMFARNEIVLAYTDKSKYKDEINSTNWYKILQRPDVKIGFSNPNDDPCGYRTQMVLQLAELYYKDPTIYDNLVLKHSNIKVEENNGTYLILVPKELDVDTNKLFVRSKETDLLAPLEAGAFDYLFIYKSVANQHHLKYIELPKEINLGYYEYADTYKKVALKIIAKNKTINAKPIVYGMTVPTNAPHKKEAIEFVKFVLGHPEVLENNGQPAIIPAVAYGNVPEELKDLVKIEK</sequence>